<organism>
    <name type="scientific">Bacillus cereus (strain ATCC 14579 / DSM 31 / CCUG 7414 / JCM 2152 / NBRC 15305 / NCIMB 9373 / NCTC 2599 / NRRL B-3711)</name>
    <dbReference type="NCBI Taxonomy" id="226900"/>
    <lineage>
        <taxon>Bacteria</taxon>
        <taxon>Bacillati</taxon>
        <taxon>Bacillota</taxon>
        <taxon>Bacilli</taxon>
        <taxon>Bacillales</taxon>
        <taxon>Bacillaceae</taxon>
        <taxon>Bacillus</taxon>
        <taxon>Bacillus cereus group</taxon>
    </lineage>
</organism>
<sequence length="293" mass="33446">MTENNDIKMVIITGMSGAGKTVALQSFEDLGYFCVDNLPPMLLPKFIELMADSKGKMNKVALGIDLRGREFFEHLWGALDDLSERTWIIPHILFLDAKDSTLVTRYKETRRSHPLAPTGLPLKGIEAERNLLTDMKARANIVLDTSDLKPKELREKIVHLFSTETEQAFRVNVMSFGFKYGIPIDADLVFDVRFLPNPYYIPHMKPLTGLDEEVSSYVLKFNETHKFLEKLTDLITFMLPHYKREGKSQLVIAIGCTGGQHRSVTLTEYLGKHLKPEYSVHVSHRDVEKRKGH</sequence>
<feature type="chain" id="PRO_0000107683" description="Nucleotide-binding protein BC_5156">
    <location>
        <begin position="1"/>
        <end position="293"/>
    </location>
</feature>
<feature type="binding site" evidence="1">
    <location>
        <begin position="14"/>
        <end position="21"/>
    </location>
    <ligand>
        <name>ATP</name>
        <dbReference type="ChEBI" id="CHEBI:30616"/>
    </ligand>
</feature>
<feature type="binding site" evidence="1">
    <location>
        <begin position="65"/>
        <end position="68"/>
    </location>
    <ligand>
        <name>GTP</name>
        <dbReference type="ChEBI" id="CHEBI:37565"/>
    </ligand>
</feature>
<dbReference type="EMBL" id="AE016877">
    <property type="protein sequence ID" value="AAP12021.1"/>
    <property type="molecule type" value="Genomic_DNA"/>
</dbReference>
<dbReference type="RefSeq" id="NP_834820.1">
    <property type="nucleotide sequence ID" value="NC_004722.1"/>
</dbReference>
<dbReference type="SMR" id="Q815J4"/>
<dbReference type="STRING" id="226900.BC_5156"/>
<dbReference type="KEGG" id="bce:BC5156"/>
<dbReference type="PATRIC" id="fig|226900.8.peg.5314"/>
<dbReference type="HOGENOM" id="CLU_059558_0_0_9"/>
<dbReference type="OrthoDB" id="9784461at2"/>
<dbReference type="Proteomes" id="UP000001417">
    <property type="component" value="Chromosome"/>
</dbReference>
<dbReference type="GO" id="GO:0005524">
    <property type="term" value="F:ATP binding"/>
    <property type="evidence" value="ECO:0007669"/>
    <property type="project" value="UniProtKB-UniRule"/>
</dbReference>
<dbReference type="GO" id="GO:0005525">
    <property type="term" value="F:GTP binding"/>
    <property type="evidence" value="ECO:0007669"/>
    <property type="project" value="UniProtKB-UniRule"/>
</dbReference>
<dbReference type="GO" id="GO:0060090">
    <property type="term" value="F:molecular adaptor activity"/>
    <property type="evidence" value="ECO:0000318"/>
    <property type="project" value="GO_Central"/>
</dbReference>
<dbReference type="Gene3D" id="3.40.50.300">
    <property type="entry name" value="P-loop containing nucleotide triphosphate hydrolases"/>
    <property type="match status" value="1"/>
</dbReference>
<dbReference type="HAMAP" id="MF_00636">
    <property type="entry name" value="RapZ_like"/>
    <property type="match status" value="1"/>
</dbReference>
<dbReference type="InterPro" id="IPR027417">
    <property type="entry name" value="P-loop_NTPase"/>
</dbReference>
<dbReference type="InterPro" id="IPR005337">
    <property type="entry name" value="RapZ-like"/>
</dbReference>
<dbReference type="InterPro" id="IPR053930">
    <property type="entry name" value="RapZ-like_N"/>
</dbReference>
<dbReference type="InterPro" id="IPR053931">
    <property type="entry name" value="RapZ_C"/>
</dbReference>
<dbReference type="NCBIfam" id="NF003828">
    <property type="entry name" value="PRK05416.1"/>
    <property type="match status" value="1"/>
</dbReference>
<dbReference type="PANTHER" id="PTHR30448">
    <property type="entry name" value="RNASE ADAPTER PROTEIN RAPZ"/>
    <property type="match status" value="1"/>
</dbReference>
<dbReference type="PANTHER" id="PTHR30448:SF0">
    <property type="entry name" value="RNASE ADAPTER PROTEIN RAPZ"/>
    <property type="match status" value="1"/>
</dbReference>
<dbReference type="Pfam" id="PF22740">
    <property type="entry name" value="PapZ_C"/>
    <property type="match status" value="1"/>
</dbReference>
<dbReference type="Pfam" id="PF03668">
    <property type="entry name" value="RapZ-like_N"/>
    <property type="match status" value="1"/>
</dbReference>
<dbReference type="PIRSF" id="PIRSF005052">
    <property type="entry name" value="P-loopkin"/>
    <property type="match status" value="1"/>
</dbReference>
<dbReference type="SUPFAM" id="SSF52540">
    <property type="entry name" value="P-loop containing nucleoside triphosphate hydrolases"/>
    <property type="match status" value="1"/>
</dbReference>
<accession>Q815J4</accession>
<keyword id="KW-0067">ATP-binding</keyword>
<keyword id="KW-0342">GTP-binding</keyword>
<keyword id="KW-0547">Nucleotide-binding</keyword>
<keyword id="KW-1185">Reference proteome</keyword>
<proteinExistence type="inferred from homology"/>
<protein>
    <recommendedName>
        <fullName evidence="1">Nucleotide-binding protein BC_5156</fullName>
    </recommendedName>
</protein>
<evidence type="ECO:0000255" key="1">
    <source>
        <dbReference type="HAMAP-Rule" id="MF_00636"/>
    </source>
</evidence>
<comment type="function">
    <text evidence="1">Displays ATPase and GTPase activities.</text>
</comment>
<comment type="similarity">
    <text evidence="1">Belongs to the RapZ-like family.</text>
</comment>
<reference key="1">
    <citation type="journal article" date="2003" name="Nature">
        <title>Genome sequence of Bacillus cereus and comparative analysis with Bacillus anthracis.</title>
        <authorList>
            <person name="Ivanova N."/>
            <person name="Sorokin A."/>
            <person name="Anderson I."/>
            <person name="Galleron N."/>
            <person name="Candelon B."/>
            <person name="Kapatral V."/>
            <person name="Bhattacharyya A."/>
            <person name="Reznik G."/>
            <person name="Mikhailova N."/>
            <person name="Lapidus A."/>
            <person name="Chu L."/>
            <person name="Mazur M."/>
            <person name="Goltsman E."/>
            <person name="Larsen N."/>
            <person name="D'Souza M."/>
            <person name="Walunas T."/>
            <person name="Grechkin Y."/>
            <person name="Pusch G."/>
            <person name="Haselkorn R."/>
            <person name="Fonstein M."/>
            <person name="Ehrlich S.D."/>
            <person name="Overbeek R."/>
            <person name="Kyrpides N.C."/>
        </authorList>
    </citation>
    <scope>NUCLEOTIDE SEQUENCE [LARGE SCALE GENOMIC DNA]</scope>
    <source>
        <strain>ATCC 14579 / DSM 31 / CCUG 7414 / JCM 2152 / NBRC 15305 / NCIMB 9373 / NCTC 2599 / NRRL B-3711</strain>
    </source>
</reference>
<name>Y5156_BACCR</name>
<gene>
    <name type="ordered locus">BC_5156</name>
</gene>